<keyword id="KW-0050">Antiport</keyword>
<keyword id="KW-0997">Cell inner membrane</keyword>
<keyword id="KW-1003">Cell membrane</keyword>
<keyword id="KW-0406">Ion transport</keyword>
<keyword id="KW-0472">Membrane</keyword>
<keyword id="KW-1185">Reference proteome</keyword>
<keyword id="KW-0915">Sodium</keyword>
<keyword id="KW-0739">Sodium transport</keyword>
<keyword id="KW-0812">Transmembrane</keyword>
<keyword id="KW-1133">Transmembrane helix</keyword>
<keyword id="KW-0813">Transport</keyword>
<accession>Q1D5J5</accession>
<sequence>MAQTPPTSEARPRPPVPTLFRVALAPIQAFFRLEAASGILLALCAVAAMVWANSPWAATYSAVFDARMTVGLAGVHAGFTIREFINDGLMTLFFFVVGMEIKRELSSGELRTFSRAVLPLIAAMGGMIVPAALYAAFNQGTPAQAGWAIPMATDIAFSIGCLTLVKTRVSHGLVVFLTALAIFDDIGGILVIALFYGSGLHVSWLVGALGVLAVLACLNHFQVRNGVAYALAGAALWYTMHHGGIHATLSGVVLGLFMPARPLRPGRHVLEELRLYVDRALQTAMDEATRGAQILYLEERLEELEPPLNRFVHLWHVPVAYGIVPLFALANSGISLEGMGWADLLRPLPLGIIAGLFVGKQVGIFLFTWGSLKLGVADRPGGATLPQLHGVAVVAGIGFTVALFVAGLAFPTQPELLTEAKLGILVGSLLSAVVGYALLRFVAKPAVPA</sequence>
<reference key="1">
    <citation type="journal article" date="2006" name="Proc. Natl. Acad. Sci. U.S.A.">
        <title>Evolution of sensory complexity recorded in a myxobacterial genome.</title>
        <authorList>
            <person name="Goldman B.S."/>
            <person name="Nierman W.C."/>
            <person name="Kaiser D."/>
            <person name="Slater S.C."/>
            <person name="Durkin A.S."/>
            <person name="Eisen J.A."/>
            <person name="Ronning C.M."/>
            <person name="Barbazuk W.B."/>
            <person name="Blanchard M."/>
            <person name="Field C."/>
            <person name="Halling C."/>
            <person name="Hinkle G."/>
            <person name="Iartchuk O."/>
            <person name="Kim H.S."/>
            <person name="Mackenzie C."/>
            <person name="Madupu R."/>
            <person name="Miller N."/>
            <person name="Shvartsbeyn A."/>
            <person name="Sullivan S.A."/>
            <person name="Vaudin M."/>
            <person name="Wiegand R."/>
            <person name="Kaplan H.B."/>
        </authorList>
    </citation>
    <scope>NUCLEOTIDE SEQUENCE [LARGE SCALE GENOMIC DNA]</scope>
    <source>
        <strain>DK1622</strain>
    </source>
</reference>
<name>NHAA1_MYXXD</name>
<comment type="function">
    <text evidence="1">Na(+)/H(+) antiporter that extrudes sodium in exchange for external protons.</text>
</comment>
<comment type="catalytic activity">
    <reaction evidence="1">
        <text>Na(+)(in) + 2 H(+)(out) = Na(+)(out) + 2 H(+)(in)</text>
        <dbReference type="Rhea" id="RHEA:29251"/>
        <dbReference type="ChEBI" id="CHEBI:15378"/>
        <dbReference type="ChEBI" id="CHEBI:29101"/>
    </reaction>
    <physiologicalReaction direction="left-to-right" evidence="1">
        <dbReference type="Rhea" id="RHEA:29252"/>
    </physiologicalReaction>
</comment>
<comment type="subcellular location">
    <subcellularLocation>
        <location evidence="1">Cell inner membrane</location>
        <topology evidence="1">Multi-pass membrane protein</topology>
    </subcellularLocation>
</comment>
<comment type="similarity">
    <text evidence="1">Belongs to the NhaA Na(+)/H(+) (TC 2.A.33) antiporter family.</text>
</comment>
<gene>
    <name evidence="1" type="primary">nhaA1</name>
    <name type="ordered locus">MXAN_3898</name>
</gene>
<feature type="chain" id="PRO_0000334343" description="Na(+)/H(+) antiporter NhaA 1">
    <location>
        <begin position="1"/>
        <end position="449"/>
    </location>
</feature>
<feature type="transmembrane region" description="Helical" evidence="1">
    <location>
        <begin position="38"/>
        <end position="58"/>
    </location>
</feature>
<feature type="transmembrane region" description="Helical" evidence="1">
    <location>
        <begin position="79"/>
        <end position="99"/>
    </location>
</feature>
<feature type="transmembrane region" description="Helical" evidence="1">
    <location>
        <begin position="117"/>
        <end position="137"/>
    </location>
</feature>
<feature type="transmembrane region" description="Helical" evidence="1">
    <location>
        <begin position="145"/>
        <end position="165"/>
    </location>
</feature>
<feature type="transmembrane region" description="Helical" evidence="1">
    <location>
        <begin position="175"/>
        <end position="195"/>
    </location>
</feature>
<feature type="transmembrane region" description="Helical" evidence="1">
    <location>
        <begin position="198"/>
        <end position="218"/>
    </location>
</feature>
<feature type="transmembrane region" description="Helical" evidence="1">
    <location>
        <begin position="240"/>
        <end position="260"/>
    </location>
</feature>
<feature type="transmembrane region" description="Helical" evidence="1">
    <location>
        <begin position="311"/>
        <end position="331"/>
    </location>
</feature>
<feature type="transmembrane region" description="Helical" evidence="1">
    <location>
        <begin position="347"/>
        <end position="367"/>
    </location>
</feature>
<feature type="transmembrane region" description="Helical" evidence="1">
    <location>
        <begin position="390"/>
        <end position="410"/>
    </location>
</feature>
<feature type="transmembrane region" description="Helical" evidence="1">
    <location>
        <begin position="422"/>
        <end position="442"/>
    </location>
</feature>
<protein>
    <recommendedName>
        <fullName evidence="1">Na(+)/H(+) antiporter NhaA 1</fullName>
    </recommendedName>
    <alternativeName>
        <fullName evidence="1">Sodium/proton antiporter NhaA 1</fullName>
    </alternativeName>
</protein>
<evidence type="ECO:0000255" key="1">
    <source>
        <dbReference type="HAMAP-Rule" id="MF_01844"/>
    </source>
</evidence>
<dbReference type="EMBL" id="CP000113">
    <property type="protein sequence ID" value="ABF92348.1"/>
    <property type="molecule type" value="Genomic_DNA"/>
</dbReference>
<dbReference type="RefSeq" id="WP_011553908.1">
    <property type="nucleotide sequence ID" value="NC_008095.1"/>
</dbReference>
<dbReference type="SMR" id="Q1D5J5"/>
<dbReference type="STRING" id="246197.MXAN_3898"/>
<dbReference type="EnsemblBacteria" id="ABF92348">
    <property type="protein sequence ID" value="ABF92348"/>
    <property type="gene ID" value="MXAN_3898"/>
</dbReference>
<dbReference type="GeneID" id="41361230"/>
<dbReference type="KEGG" id="mxa:MXAN_3898"/>
<dbReference type="eggNOG" id="COG3004">
    <property type="taxonomic scope" value="Bacteria"/>
</dbReference>
<dbReference type="HOGENOM" id="CLU_015803_1_2_7"/>
<dbReference type="OrthoDB" id="9808135at2"/>
<dbReference type="Proteomes" id="UP000002402">
    <property type="component" value="Chromosome"/>
</dbReference>
<dbReference type="GO" id="GO:0005886">
    <property type="term" value="C:plasma membrane"/>
    <property type="evidence" value="ECO:0007669"/>
    <property type="project" value="UniProtKB-SubCell"/>
</dbReference>
<dbReference type="GO" id="GO:0015385">
    <property type="term" value="F:sodium:proton antiporter activity"/>
    <property type="evidence" value="ECO:0007669"/>
    <property type="project" value="TreeGrafter"/>
</dbReference>
<dbReference type="GO" id="GO:0006885">
    <property type="term" value="P:regulation of pH"/>
    <property type="evidence" value="ECO:0007669"/>
    <property type="project" value="InterPro"/>
</dbReference>
<dbReference type="Gene3D" id="1.20.1530.10">
    <property type="entry name" value="Na+/H+ antiporter like domain"/>
    <property type="match status" value="1"/>
</dbReference>
<dbReference type="HAMAP" id="MF_01844">
    <property type="entry name" value="NhaA"/>
    <property type="match status" value="1"/>
</dbReference>
<dbReference type="InterPro" id="IPR023171">
    <property type="entry name" value="Na/H_antiporter_dom_sf"/>
</dbReference>
<dbReference type="InterPro" id="IPR004670">
    <property type="entry name" value="NhaA"/>
</dbReference>
<dbReference type="NCBIfam" id="TIGR00773">
    <property type="entry name" value="NhaA"/>
    <property type="match status" value="1"/>
</dbReference>
<dbReference type="PANTHER" id="PTHR30341:SF0">
    <property type="entry name" value="NA(+)_H(+) ANTIPORTER NHAA"/>
    <property type="match status" value="1"/>
</dbReference>
<dbReference type="PANTHER" id="PTHR30341">
    <property type="entry name" value="SODIUM ION/PROTON ANTIPORTER NHAA-RELATED"/>
    <property type="match status" value="1"/>
</dbReference>
<dbReference type="Pfam" id="PF06965">
    <property type="entry name" value="Na_H_antiport_1"/>
    <property type="match status" value="1"/>
</dbReference>
<organism>
    <name type="scientific">Myxococcus xanthus (strain DK1622)</name>
    <dbReference type="NCBI Taxonomy" id="246197"/>
    <lineage>
        <taxon>Bacteria</taxon>
        <taxon>Pseudomonadati</taxon>
        <taxon>Myxococcota</taxon>
        <taxon>Myxococcia</taxon>
        <taxon>Myxococcales</taxon>
        <taxon>Cystobacterineae</taxon>
        <taxon>Myxococcaceae</taxon>
        <taxon>Myxococcus</taxon>
    </lineage>
</organism>
<proteinExistence type="inferred from homology"/>